<protein>
    <recommendedName>
        <fullName evidence="1">Small ribosomal subunit protein eS4</fullName>
    </recommendedName>
    <alternativeName>
        <fullName>40S ribosomal protein S4</fullName>
    </alternativeName>
</protein>
<name>RS4_LYSTE</name>
<feature type="chain" id="PRO_0000260289" description="Small ribosomal subunit protein eS4">
    <location>
        <begin position="1"/>
        <end position="262"/>
    </location>
</feature>
<feature type="domain" description="S4 RNA-binding">
    <location>
        <begin position="42"/>
        <end position="104"/>
    </location>
</feature>
<keyword id="KW-0687">Ribonucleoprotein</keyword>
<keyword id="KW-0689">Ribosomal protein</keyword>
<keyword id="KW-0694">RNA-binding</keyword>
<keyword id="KW-0699">rRNA-binding</keyword>
<gene>
    <name type="primary">RpS4</name>
</gene>
<proteinExistence type="evidence at transcript level"/>
<accession>Q56FH2</accession>
<reference key="1">
    <citation type="submission" date="2005-03" db="EMBL/GenBank/DDBJ databases">
        <title>Ribosomal protein sequences from Lysiphlebus testaceipes.</title>
        <authorList>
            <person name="Weathersbee A.A. III"/>
            <person name="Hunter W.B."/>
            <person name="Panchal T.D."/>
            <person name="Dang P.M."/>
        </authorList>
    </citation>
    <scope>NUCLEOTIDE SEQUENCE [MRNA]</scope>
    <source>
        <strain>Florida</strain>
    </source>
</reference>
<evidence type="ECO:0000305" key="1"/>
<dbReference type="EMBL" id="AY961528">
    <property type="protein sequence ID" value="AAX62430.1"/>
    <property type="molecule type" value="mRNA"/>
</dbReference>
<dbReference type="SMR" id="Q56FH2"/>
<dbReference type="GO" id="GO:0022627">
    <property type="term" value="C:cytosolic small ribosomal subunit"/>
    <property type="evidence" value="ECO:0007669"/>
    <property type="project" value="TreeGrafter"/>
</dbReference>
<dbReference type="GO" id="GO:0019843">
    <property type="term" value="F:rRNA binding"/>
    <property type="evidence" value="ECO:0007669"/>
    <property type="project" value="UniProtKB-KW"/>
</dbReference>
<dbReference type="GO" id="GO:0003735">
    <property type="term" value="F:structural constituent of ribosome"/>
    <property type="evidence" value="ECO:0007669"/>
    <property type="project" value="InterPro"/>
</dbReference>
<dbReference type="GO" id="GO:0006412">
    <property type="term" value="P:translation"/>
    <property type="evidence" value="ECO:0007669"/>
    <property type="project" value="InterPro"/>
</dbReference>
<dbReference type="CDD" id="cd06087">
    <property type="entry name" value="KOW_RPS4"/>
    <property type="match status" value="1"/>
</dbReference>
<dbReference type="CDD" id="cd00165">
    <property type="entry name" value="S4"/>
    <property type="match status" value="1"/>
</dbReference>
<dbReference type="FunFam" id="2.30.30.30:FF:000005">
    <property type="entry name" value="40S ribosomal protein S4"/>
    <property type="match status" value="1"/>
</dbReference>
<dbReference type="FunFam" id="2.40.50.740:FF:000001">
    <property type="entry name" value="40S ribosomal protein S4"/>
    <property type="match status" value="1"/>
</dbReference>
<dbReference type="FunFam" id="3.10.290.10:FF:000051">
    <property type="entry name" value="40S ribosomal protein S4, X isoform"/>
    <property type="match status" value="1"/>
</dbReference>
<dbReference type="Gene3D" id="2.30.30.30">
    <property type="match status" value="1"/>
</dbReference>
<dbReference type="Gene3D" id="2.40.50.740">
    <property type="match status" value="1"/>
</dbReference>
<dbReference type="Gene3D" id="3.10.290.10">
    <property type="entry name" value="RNA-binding S4 domain"/>
    <property type="match status" value="1"/>
</dbReference>
<dbReference type="HAMAP" id="MF_00485">
    <property type="entry name" value="Ribosomal_eS4"/>
    <property type="match status" value="1"/>
</dbReference>
<dbReference type="InterPro" id="IPR005824">
    <property type="entry name" value="KOW"/>
</dbReference>
<dbReference type="InterPro" id="IPR014722">
    <property type="entry name" value="Rib_uL2_dom2"/>
</dbReference>
<dbReference type="InterPro" id="IPR000876">
    <property type="entry name" value="Ribosomal_eS4"/>
</dbReference>
<dbReference type="InterPro" id="IPR032277">
    <property type="entry name" value="Ribosomal_eS4_C"/>
</dbReference>
<dbReference type="InterPro" id="IPR013845">
    <property type="entry name" value="Ribosomal_eS4_central_region"/>
</dbReference>
<dbReference type="InterPro" id="IPR038237">
    <property type="entry name" value="Ribosomal_eS4_central_sf"/>
</dbReference>
<dbReference type="InterPro" id="IPR041982">
    <property type="entry name" value="Ribosomal_eS4_KOW"/>
</dbReference>
<dbReference type="InterPro" id="IPR013843">
    <property type="entry name" value="Ribosomal_eS4_N"/>
</dbReference>
<dbReference type="InterPro" id="IPR018199">
    <property type="entry name" value="Ribosomal_eS4_N_CS"/>
</dbReference>
<dbReference type="InterPro" id="IPR002942">
    <property type="entry name" value="S4_RNA-bd"/>
</dbReference>
<dbReference type="InterPro" id="IPR036986">
    <property type="entry name" value="S4_RNA-bd_sf"/>
</dbReference>
<dbReference type="PANTHER" id="PTHR11581">
    <property type="entry name" value="30S/40S RIBOSOMAL PROTEIN S4"/>
    <property type="match status" value="1"/>
</dbReference>
<dbReference type="PANTHER" id="PTHR11581:SF0">
    <property type="entry name" value="SMALL RIBOSOMAL SUBUNIT PROTEIN ES4"/>
    <property type="match status" value="1"/>
</dbReference>
<dbReference type="Pfam" id="PF16121">
    <property type="entry name" value="40S_S4_C"/>
    <property type="match status" value="1"/>
</dbReference>
<dbReference type="Pfam" id="PF00467">
    <property type="entry name" value="KOW"/>
    <property type="match status" value="1"/>
</dbReference>
<dbReference type="Pfam" id="PF00900">
    <property type="entry name" value="Ribosomal_S4e"/>
    <property type="match status" value="1"/>
</dbReference>
<dbReference type="Pfam" id="PF08071">
    <property type="entry name" value="RS4NT"/>
    <property type="match status" value="1"/>
</dbReference>
<dbReference type="Pfam" id="PF01479">
    <property type="entry name" value="S4"/>
    <property type="match status" value="1"/>
</dbReference>
<dbReference type="PIRSF" id="PIRSF002116">
    <property type="entry name" value="Ribosomal_S4"/>
    <property type="match status" value="1"/>
</dbReference>
<dbReference type="PROSITE" id="PS00528">
    <property type="entry name" value="RIBOSOMAL_S4E"/>
    <property type="match status" value="1"/>
</dbReference>
<dbReference type="PROSITE" id="PS50889">
    <property type="entry name" value="S4"/>
    <property type="match status" value="1"/>
</dbReference>
<organism>
    <name type="scientific">Lysiphlebus testaceipes</name>
    <name type="common">Greenbugs aphid parastoid</name>
    <dbReference type="NCBI Taxonomy" id="77504"/>
    <lineage>
        <taxon>Eukaryota</taxon>
        <taxon>Metazoa</taxon>
        <taxon>Ecdysozoa</taxon>
        <taxon>Arthropoda</taxon>
        <taxon>Hexapoda</taxon>
        <taxon>Insecta</taxon>
        <taxon>Pterygota</taxon>
        <taxon>Neoptera</taxon>
        <taxon>Endopterygota</taxon>
        <taxon>Hymenoptera</taxon>
        <taxon>Apocrita</taxon>
        <taxon>Ichneumonoidea</taxon>
        <taxon>Braconidae</taxon>
        <taxon>Aphidiinae</taxon>
        <taxon>Lysiphlebus</taxon>
    </lineage>
</organism>
<comment type="similarity">
    <text evidence="1">Belongs to the eukaryotic ribosomal protein eS4 family.</text>
</comment>
<sequence length="262" mass="29431">MARGPKKHLKRLNAPKSWMLGKLGGVYAPRPSTGPHKLRECLPLLIFLRNRLKYALTNCEVTKITMQRLIKVDGKVRTDSNYPLGFMDVVTIEKTGEFFRLIYDVKGRFSIHRISNEEAKYKLCKVRRVQTGPKGVPFLVTHDGRTLRYPDPVIKVNDTIQLEIATNKILDSIKFDSGNLCMITGGRNLGRVGTVVSRERHPGSFDICHIKDSQGHTFATRMNNVFIIGKGSKAYVSLPRGKGVKLSIAEERDKRLAAKGAN</sequence>